<accession>A6NKF1</accession>
<accession>A8MX08</accession>
<accession>Q99773</accession>
<protein>
    <recommendedName>
        <fullName>SAC3 domain-containing protein 1</fullName>
    </recommendedName>
    <alternativeName>
        <fullName>SAC3 homology domain-containing protein 1</fullName>
    </alternativeName>
</protein>
<keyword id="KW-0025">Alternative splicing</keyword>
<keyword id="KW-0131">Cell cycle</keyword>
<keyword id="KW-0132">Cell division</keyword>
<keyword id="KW-0963">Cytoplasm</keyword>
<keyword id="KW-0206">Cytoskeleton</keyword>
<keyword id="KW-0498">Mitosis</keyword>
<keyword id="KW-0597">Phosphoprotein</keyword>
<keyword id="KW-1267">Proteomics identification</keyword>
<keyword id="KW-1185">Reference proteome</keyword>
<proteinExistence type="evidence at protein level"/>
<reference key="1">
    <citation type="journal article" date="1997" name="Genome Res.">
        <title>Large-scale concatenation cDNA sequencing.</title>
        <authorList>
            <person name="Yu W."/>
            <person name="Andersson B."/>
            <person name="Worley K.C."/>
            <person name="Muzny D.M."/>
            <person name="Ding Y."/>
            <person name="Liu W."/>
            <person name="Ricafrente J.Y."/>
            <person name="Wentland M.A."/>
            <person name="Lennon G."/>
            <person name="Gibbs R.A."/>
        </authorList>
    </citation>
    <scope>NUCLEOTIDE SEQUENCE [LARGE SCALE MRNA] (ISOFORM 2)</scope>
    <scope>VARIANTS PRO-8 AND ARG-155</scope>
    <source>
        <tissue>Brain</tissue>
    </source>
</reference>
<reference key="2">
    <citation type="journal article" date="2006" name="Nature">
        <title>Human chromosome 11 DNA sequence and analysis including novel gene identification.</title>
        <authorList>
            <person name="Taylor T.D."/>
            <person name="Noguchi H."/>
            <person name="Totoki Y."/>
            <person name="Toyoda A."/>
            <person name="Kuroki Y."/>
            <person name="Dewar K."/>
            <person name="Lloyd C."/>
            <person name="Itoh T."/>
            <person name="Takeda T."/>
            <person name="Kim D.-W."/>
            <person name="She X."/>
            <person name="Barlow K.F."/>
            <person name="Bloom T."/>
            <person name="Bruford E."/>
            <person name="Chang J.L."/>
            <person name="Cuomo C.A."/>
            <person name="Eichler E."/>
            <person name="FitzGerald M.G."/>
            <person name="Jaffe D.B."/>
            <person name="LaButti K."/>
            <person name="Nicol R."/>
            <person name="Park H.-S."/>
            <person name="Seaman C."/>
            <person name="Sougnez C."/>
            <person name="Yang X."/>
            <person name="Zimmer A.R."/>
            <person name="Zody M.C."/>
            <person name="Birren B.W."/>
            <person name="Nusbaum C."/>
            <person name="Fujiyama A."/>
            <person name="Hattori M."/>
            <person name="Rogers J."/>
            <person name="Lander E.S."/>
            <person name="Sakaki Y."/>
        </authorList>
    </citation>
    <scope>NUCLEOTIDE SEQUENCE [LARGE SCALE GENOMIC DNA]</scope>
</reference>
<reference key="3">
    <citation type="journal article" date="2004" name="Genome Res.">
        <title>The status, quality, and expansion of the NIH full-length cDNA project: the Mammalian Gene Collection (MGC).</title>
        <authorList>
            <consortium name="The MGC Project Team"/>
        </authorList>
    </citation>
    <scope>NUCLEOTIDE SEQUENCE [LARGE SCALE MRNA] (ISOFORM 1)</scope>
    <scope>VARIANTS PRO-8 AND ARG-155</scope>
    <source>
        <tissue>Muscle</tissue>
    </source>
</reference>
<reference key="4">
    <citation type="journal article" date="2005" name="Cell">
        <title>Integrator, a multiprotein mediator of small nuclear RNA processing, associates with the C-terminal repeat of RNA polymerase II.</title>
        <authorList>
            <person name="Baillat D."/>
            <person name="Hakimi M.-A."/>
            <person name="Naeaer A.M."/>
            <person name="Shilatifard A."/>
            <person name="Cooch N."/>
            <person name="Shiekhattar R."/>
        </authorList>
    </citation>
    <scope>IDENTIFICATION IN COMPLEX WITH SEM1</scope>
    <scope>IDENTIFICATION BY MASS SPECTROMETRY</scope>
</reference>
<reference key="5">
    <citation type="journal article" date="2008" name="Proc. Natl. Acad. Sci. U.S.A.">
        <title>A quantitative atlas of mitotic phosphorylation.</title>
        <authorList>
            <person name="Dephoure N."/>
            <person name="Zhou C."/>
            <person name="Villen J."/>
            <person name="Beausoleil S.A."/>
            <person name="Bakalarski C.E."/>
            <person name="Elledge S.J."/>
            <person name="Gygi S.P."/>
        </authorList>
    </citation>
    <scope>PHOSPHORYLATION [LARGE SCALE ANALYSIS] AT SER-402</scope>
    <scope>IDENTIFICATION BY MASS SPECTROMETRY [LARGE SCALE ANALYSIS]</scope>
    <source>
        <tissue>Cervix carcinoma</tissue>
    </source>
</reference>
<reference key="6">
    <citation type="journal article" date="2009" name="Anal. Chem.">
        <title>Lys-N and trypsin cover complementary parts of the phosphoproteome in a refined SCX-based approach.</title>
        <authorList>
            <person name="Gauci S."/>
            <person name="Helbig A.O."/>
            <person name="Slijper M."/>
            <person name="Krijgsveld J."/>
            <person name="Heck A.J."/>
            <person name="Mohammed S."/>
        </authorList>
    </citation>
    <scope>IDENTIFICATION BY MASS SPECTROMETRY [LARGE SCALE ANALYSIS]</scope>
</reference>
<reference key="7">
    <citation type="journal article" date="2009" name="Sci. Signal.">
        <title>Quantitative phosphoproteomic analysis of T cell receptor signaling reveals system-wide modulation of protein-protein interactions.</title>
        <authorList>
            <person name="Mayya V."/>
            <person name="Lundgren D.H."/>
            <person name="Hwang S.-I."/>
            <person name="Rezaul K."/>
            <person name="Wu L."/>
            <person name="Eng J.K."/>
            <person name="Rodionov V."/>
            <person name="Han D.K."/>
        </authorList>
    </citation>
    <scope>PHOSPHORYLATION [LARGE SCALE ANALYSIS] AT SER-402</scope>
    <scope>IDENTIFICATION BY MASS SPECTROMETRY [LARGE SCALE ANALYSIS]</scope>
    <source>
        <tissue>Leukemic T-cell</tissue>
    </source>
</reference>
<reference key="8">
    <citation type="journal article" date="2010" name="Sci. Signal.">
        <title>Quantitative phosphoproteomics reveals widespread full phosphorylation site occupancy during mitosis.</title>
        <authorList>
            <person name="Olsen J.V."/>
            <person name="Vermeulen M."/>
            <person name="Santamaria A."/>
            <person name="Kumar C."/>
            <person name="Miller M.L."/>
            <person name="Jensen L.J."/>
            <person name="Gnad F."/>
            <person name="Cox J."/>
            <person name="Jensen T.S."/>
            <person name="Nigg E.A."/>
            <person name="Brunak S."/>
            <person name="Mann M."/>
        </authorList>
    </citation>
    <scope>PHOSPHORYLATION [LARGE SCALE ANALYSIS] AT SER-402</scope>
    <scope>IDENTIFICATION BY MASS SPECTROMETRY [LARGE SCALE ANALYSIS]</scope>
    <source>
        <tissue>Cervix carcinoma</tissue>
    </source>
</reference>
<reference key="9">
    <citation type="journal article" date="2013" name="J. Proteome Res.">
        <title>Toward a comprehensive characterization of a human cancer cell phosphoproteome.</title>
        <authorList>
            <person name="Zhou H."/>
            <person name="Di Palma S."/>
            <person name="Preisinger C."/>
            <person name="Peng M."/>
            <person name="Polat A.N."/>
            <person name="Heck A.J."/>
            <person name="Mohammed S."/>
        </authorList>
    </citation>
    <scope>PHOSPHORYLATION [LARGE SCALE ANALYSIS] AT SER-402</scope>
    <scope>IDENTIFICATION BY MASS SPECTROMETRY [LARGE SCALE ANALYSIS]</scope>
    <source>
        <tissue>Cervix carcinoma</tissue>
        <tissue>Erythroleukemia</tissue>
    </source>
</reference>
<name>SAC31_HUMAN</name>
<gene>
    <name type="primary">SAC3D1</name>
    <name type="synonym">SHD1</name>
</gene>
<feature type="chain" id="PRO_0000308204" description="SAC3 domain-containing protein 1">
    <location>
        <begin position="1"/>
        <end position="404"/>
    </location>
</feature>
<feature type="domain" description="PCI" evidence="2">
    <location>
        <begin position="203"/>
        <end position="379"/>
    </location>
</feature>
<feature type="region of interest" description="Disordered" evidence="3">
    <location>
        <begin position="1"/>
        <end position="58"/>
    </location>
</feature>
<feature type="region of interest" description="Disordered" evidence="3">
    <location>
        <begin position="77"/>
        <end position="117"/>
    </location>
</feature>
<feature type="compositionally biased region" description="Pro residues" evidence="3">
    <location>
        <begin position="12"/>
        <end position="21"/>
    </location>
</feature>
<feature type="compositionally biased region" description="Basic and acidic residues" evidence="3">
    <location>
        <begin position="87"/>
        <end position="101"/>
    </location>
</feature>
<feature type="modified residue" description="Phosphoserine" evidence="9 10 11 12">
    <location>
        <position position="402"/>
    </location>
</feature>
<feature type="splice variant" id="VSP_036589" description="In isoform 2." evidence="7">
    <original>SVEALHEVLQLPAALRACPPLRKALAVDAAFREGNAARLFRLLQTLPYLPSCAVQCHVGHARREALARFARAFSTPKGQTLPLGFMVNLLALDGLREARDLCQAHGLPLDGEERVVFLRGRYVEEGLPPASTCKVLVESKLRGRTLEEVVMAEEEDEGTDRPGSPA</original>
    <variation>ESGSWRLGRAWGQEPTMTVEARWKPCMRFYSCLLPCAPARPSARPWR</variation>
    <location>
        <begin position="239"/>
        <end position="404"/>
    </location>
</feature>
<feature type="sequence variant" id="VAR_036755" description="In dbSNP:rs10160811." evidence="4 6">
    <original>T</original>
    <variation>P</variation>
    <location>
        <position position="8"/>
    </location>
</feature>
<feature type="sequence variant" id="VAR_062213" description="In dbSNP:rs12271134." evidence="4 6">
    <original>L</original>
    <variation>R</variation>
    <location>
        <position position="155"/>
    </location>
</feature>
<feature type="sequence variant" id="VAR_036756" description="In dbSNP:rs3741390.">
    <original>L</original>
    <variation>P</variation>
    <location>
        <position position="186"/>
    </location>
</feature>
<feature type="sequence conflict" description="In Ref. 1; AAB50210 and 3; BC007448." evidence="8" ref="1 3">
    <original>T</original>
    <variation>A</variation>
    <location>
        <position position="181"/>
    </location>
</feature>
<dbReference type="EMBL" id="U79266">
    <property type="protein sequence ID" value="AAB50210.1"/>
    <property type="molecule type" value="mRNA"/>
</dbReference>
<dbReference type="EMBL" id="AP003068">
    <property type="status" value="NOT_ANNOTATED_CDS"/>
    <property type="molecule type" value="Genomic_DNA"/>
</dbReference>
<dbReference type="EMBL" id="BC007448">
    <property type="status" value="NOT_ANNOTATED_CDS"/>
    <property type="molecule type" value="mRNA"/>
</dbReference>
<dbReference type="SMR" id="A6NKF1"/>
<dbReference type="CORUM" id="A6NKF1"/>
<dbReference type="FunCoup" id="A6NKF1">
    <property type="interactions" value="276"/>
</dbReference>
<dbReference type="IntAct" id="A6NKF1">
    <property type="interactions" value="3"/>
</dbReference>
<dbReference type="STRING" id="9606.ENSP00000436649"/>
<dbReference type="iPTMnet" id="A6NKF1"/>
<dbReference type="PhosphoSitePlus" id="A6NKF1"/>
<dbReference type="BioMuta" id="SAC3D1"/>
<dbReference type="jPOST" id="A6NKF1"/>
<dbReference type="MassIVE" id="A6NKF1"/>
<dbReference type="PaxDb" id="9606-ENSP00000381824"/>
<dbReference type="PeptideAtlas" id="A6NKF1"/>
<dbReference type="ProteomicsDB" id="1408">
    <molecule id="A6NKF1-1"/>
</dbReference>
<dbReference type="ProteomicsDB" id="1409">
    <molecule id="A6NKF1-2"/>
</dbReference>
<dbReference type="Pumba" id="A6NKF1"/>
<dbReference type="TopDownProteomics" id="A6NKF1-2">
    <molecule id="A6NKF1-2"/>
</dbReference>
<dbReference type="UCSC" id="uc058dcn.1">
    <molecule id="A6NKF1-1"/>
    <property type="organism name" value="human"/>
</dbReference>
<dbReference type="AGR" id="HGNC:30179"/>
<dbReference type="GeneCards" id="SAC3D1"/>
<dbReference type="HGNC" id="HGNC:30179">
    <property type="gene designation" value="SAC3D1"/>
</dbReference>
<dbReference type="MIM" id="618796">
    <property type="type" value="gene"/>
</dbReference>
<dbReference type="neXtProt" id="NX_A6NKF1"/>
<dbReference type="eggNOG" id="KOG1860">
    <property type="taxonomic scope" value="Eukaryota"/>
</dbReference>
<dbReference type="InParanoid" id="A6NKF1"/>
<dbReference type="OrthoDB" id="264795at2759"/>
<dbReference type="PAN-GO" id="A6NKF1">
    <property type="GO annotations" value="5 GO annotations based on evolutionary models"/>
</dbReference>
<dbReference type="PhylomeDB" id="A6NKF1"/>
<dbReference type="PathwayCommons" id="A6NKF1"/>
<dbReference type="SignaLink" id="A6NKF1"/>
<dbReference type="CD-CODE" id="8C2F96ED">
    <property type="entry name" value="Centrosome"/>
</dbReference>
<dbReference type="Pharos" id="A6NKF1">
    <property type="development level" value="Tdark"/>
</dbReference>
<dbReference type="PRO" id="PR:A6NKF1"/>
<dbReference type="Proteomes" id="UP000005640">
    <property type="component" value="Unplaced"/>
</dbReference>
<dbReference type="RNAct" id="A6NKF1">
    <property type="molecule type" value="protein"/>
</dbReference>
<dbReference type="GO" id="GO:0005813">
    <property type="term" value="C:centrosome"/>
    <property type="evidence" value="ECO:0000318"/>
    <property type="project" value="GO_Central"/>
</dbReference>
<dbReference type="GO" id="GO:0005737">
    <property type="term" value="C:cytoplasm"/>
    <property type="evidence" value="ECO:0007669"/>
    <property type="project" value="UniProtKB-KW"/>
</dbReference>
<dbReference type="GO" id="GO:0005634">
    <property type="term" value="C:nucleus"/>
    <property type="evidence" value="ECO:0000318"/>
    <property type="project" value="GO_Central"/>
</dbReference>
<dbReference type="GO" id="GO:0032991">
    <property type="term" value="C:protein-containing complex"/>
    <property type="evidence" value="ECO:0007669"/>
    <property type="project" value="UniProtKB-ARBA"/>
</dbReference>
<dbReference type="GO" id="GO:0005819">
    <property type="term" value="C:spindle"/>
    <property type="evidence" value="ECO:0000318"/>
    <property type="project" value="GO_Central"/>
</dbReference>
<dbReference type="GO" id="GO:0051301">
    <property type="term" value="P:cell division"/>
    <property type="evidence" value="ECO:0007669"/>
    <property type="project" value="UniProtKB-KW"/>
</dbReference>
<dbReference type="GO" id="GO:0051298">
    <property type="term" value="P:centrosome duplication"/>
    <property type="evidence" value="ECO:0000318"/>
    <property type="project" value="GO_Central"/>
</dbReference>
<dbReference type="GO" id="GO:0051225">
    <property type="term" value="P:spindle assembly"/>
    <property type="evidence" value="ECO:0000318"/>
    <property type="project" value="GO_Central"/>
</dbReference>
<dbReference type="FunFam" id="1.25.40.990:FF:000007">
    <property type="entry name" value="SAC3 domain containing 1"/>
    <property type="match status" value="1"/>
</dbReference>
<dbReference type="Gene3D" id="1.25.40.990">
    <property type="match status" value="1"/>
</dbReference>
<dbReference type="InterPro" id="IPR000717">
    <property type="entry name" value="PCI_dom"/>
</dbReference>
<dbReference type="InterPro" id="IPR045107">
    <property type="entry name" value="SAC3/GANP/THP3"/>
</dbReference>
<dbReference type="InterPro" id="IPR005062">
    <property type="entry name" value="SAC3/GANP/THP3_conserved"/>
</dbReference>
<dbReference type="PANTHER" id="PTHR12436">
    <property type="entry name" value="80 KDA MCM3-ASSOCIATED PROTEIN"/>
    <property type="match status" value="1"/>
</dbReference>
<dbReference type="PANTHER" id="PTHR12436:SF38">
    <property type="entry name" value="SAC3 DOMAIN-CONTAINING PROTEIN 1"/>
    <property type="match status" value="1"/>
</dbReference>
<dbReference type="Pfam" id="PF03399">
    <property type="entry name" value="SAC3_GANP"/>
    <property type="match status" value="1"/>
</dbReference>
<dbReference type="PROSITE" id="PS50250">
    <property type="entry name" value="PCI"/>
    <property type="match status" value="1"/>
</dbReference>
<comment type="function">
    <text evidence="1">Involved in centrosome duplication and mitotic progression.</text>
</comment>
<comment type="subunit">
    <text evidence="5">May be part of a SEM1-containing complex.</text>
</comment>
<comment type="subcellular location">
    <subcellularLocation>
        <location evidence="1">Cytoplasm</location>
        <location evidence="1">Cytoskeleton</location>
        <location evidence="1">Microtubule organizing center</location>
        <location evidence="1">Centrosome</location>
    </subcellularLocation>
    <subcellularLocation>
        <location evidence="1">Cytoplasm</location>
        <location evidence="1">Cytoskeleton</location>
        <location evidence="1">Spindle</location>
    </subcellularLocation>
    <text evidence="1">Localizes on centrosomes in interphase cells and at spindles in mitosis.</text>
</comment>
<comment type="alternative products">
    <event type="alternative splicing"/>
    <isoform>
        <id>A6NKF1-1</id>
        <name>1</name>
        <sequence type="displayed"/>
    </isoform>
    <isoform>
        <id>A6NKF1-2</id>
        <name>2</name>
        <sequence type="described" ref="VSP_036589"/>
    </isoform>
</comment>
<comment type="polymorphism">
    <text evidence="8">A single nucleotide deletion in the N-terminal region of the protein leads to production of a shorter protein starting at Met-47 which matches the reference genome (GRCh38/hg38) but is likely to be the minor allele.</text>
</comment>
<comment type="similarity">
    <text evidence="8">Belongs to the SAC3 family.</text>
</comment>
<comment type="sequence caution" evidence="8">
    <conflict type="erroneous gene model prediction">
        <sequence resource="EMBL" id="AP003068"/>
    </conflict>
</comment>
<evidence type="ECO:0000250" key="1"/>
<evidence type="ECO:0000255" key="2">
    <source>
        <dbReference type="PROSITE-ProRule" id="PRU01185"/>
    </source>
</evidence>
<evidence type="ECO:0000256" key="3">
    <source>
        <dbReference type="SAM" id="MobiDB-lite"/>
    </source>
</evidence>
<evidence type="ECO:0000269" key="4">
    <source>
    </source>
</evidence>
<evidence type="ECO:0000269" key="5">
    <source>
    </source>
</evidence>
<evidence type="ECO:0000269" key="6">
    <source>
    </source>
</evidence>
<evidence type="ECO:0000303" key="7">
    <source>
    </source>
</evidence>
<evidence type="ECO:0000305" key="8"/>
<evidence type="ECO:0007744" key="9">
    <source>
    </source>
</evidence>
<evidence type="ECO:0007744" key="10">
    <source>
    </source>
</evidence>
<evidence type="ECO:0007744" key="11">
    <source>
    </source>
</evidence>
<evidence type="ECO:0007744" key="12">
    <source>
    </source>
</evidence>
<organism>
    <name type="scientific">Homo sapiens</name>
    <name type="common">Human</name>
    <dbReference type="NCBI Taxonomy" id="9606"/>
    <lineage>
        <taxon>Eukaryota</taxon>
        <taxon>Metazoa</taxon>
        <taxon>Chordata</taxon>
        <taxon>Craniata</taxon>
        <taxon>Vertebrata</taxon>
        <taxon>Euteleostomi</taxon>
        <taxon>Mammalia</taxon>
        <taxon>Eutheria</taxon>
        <taxon>Euarchontoglires</taxon>
        <taxon>Primates</taxon>
        <taxon>Haplorrhini</taxon>
        <taxon>Catarrhini</taxon>
        <taxon>Hominidae</taxon>
        <taxon>Homo</taxon>
    </lineage>
</organism>
<sequence>MAGRRAQTGSAPPRPAAPHPRPASRAFPQHCRPRDAERPPSPRSPLMPGCELPVGTCPDMCPAAERAQREREHRLHRLEVVPGCRQDPPRADPQRAVKEYSRPAAGKPRPPPSQLRPPSVLLATVRYLAGEVAESADIARAEVASFVADRLRAVLLDLALQGAGDAEAAVVLEAALATLLTVVARLGPDAARGPADPVLLQAQVQEGFGSLRRCYARGAGPHPRQPAFQGLFLLYNLGSVEALHEVLQLPAALRACPPLRKALAVDAAFREGNAARLFRLLQTLPYLPSCAVQCHVGHARREALARFARAFSTPKGQTLPLGFMVNLLALDGLREARDLCQAHGLPLDGEERVVFLRGRYVEEGLPPASTCKVLVESKLRGRTLEEVVMAEEEDEGTDRPGSPA</sequence>